<evidence type="ECO:0000255" key="1">
    <source>
        <dbReference type="HAMAP-Rule" id="MF_00507"/>
    </source>
</evidence>
<sequence>MFAGLPSLTHEQQQKAVERIQELMSQGMSSGQAIALVAEELRANHSGERIVARFEDEDE</sequence>
<organism>
    <name type="scientific">Escherichia coli O127:H6 (strain E2348/69 / EPEC)</name>
    <dbReference type="NCBI Taxonomy" id="574521"/>
    <lineage>
        <taxon>Bacteria</taxon>
        <taxon>Pseudomonadati</taxon>
        <taxon>Pseudomonadota</taxon>
        <taxon>Gammaproteobacteria</taxon>
        <taxon>Enterobacterales</taxon>
        <taxon>Enterobacteriaceae</taxon>
        <taxon>Escherichia</taxon>
    </lineage>
</organism>
<dbReference type="EMBL" id="FM180568">
    <property type="protein sequence ID" value="CAS09482.1"/>
    <property type="molecule type" value="Genomic_DNA"/>
</dbReference>
<dbReference type="RefSeq" id="WP_000457336.1">
    <property type="nucleotide sequence ID" value="NC_011601.1"/>
</dbReference>
<dbReference type="SMR" id="B7USI6"/>
<dbReference type="KEGG" id="ecg:E2348C_1934"/>
<dbReference type="HOGENOM" id="CLU_185263_0_0_6"/>
<dbReference type="Proteomes" id="UP000008205">
    <property type="component" value="Chromosome"/>
</dbReference>
<dbReference type="HAMAP" id="MF_00507">
    <property type="entry name" value="UPF0181"/>
    <property type="match status" value="1"/>
</dbReference>
<dbReference type="InterPro" id="IPR005371">
    <property type="entry name" value="UPF0181"/>
</dbReference>
<dbReference type="NCBIfam" id="NF003476">
    <property type="entry name" value="PRK05114.1"/>
    <property type="match status" value="1"/>
</dbReference>
<dbReference type="Pfam" id="PF03701">
    <property type="entry name" value="UPF0181"/>
    <property type="match status" value="1"/>
</dbReference>
<accession>B7USI6</accession>
<gene>
    <name evidence="1" type="primary">yoaH</name>
    <name type="ordered locus">E2348C_1934</name>
</gene>
<reference key="1">
    <citation type="journal article" date="2009" name="J. Bacteriol.">
        <title>Complete genome sequence and comparative genome analysis of enteropathogenic Escherichia coli O127:H6 strain E2348/69.</title>
        <authorList>
            <person name="Iguchi A."/>
            <person name="Thomson N.R."/>
            <person name="Ogura Y."/>
            <person name="Saunders D."/>
            <person name="Ooka T."/>
            <person name="Henderson I.R."/>
            <person name="Harris D."/>
            <person name="Asadulghani M."/>
            <person name="Kurokawa K."/>
            <person name="Dean P."/>
            <person name="Kenny B."/>
            <person name="Quail M.A."/>
            <person name="Thurston S."/>
            <person name="Dougan G."/>
            <person name="Hayashi T."/>
            <person name="Parkhill J."/>
            <person name="Frankel G."/>
        </authorList>
    </citation>
    <scope>NUCLEOTIDE SEQUENCE [LARGE SCALE GENOMIC DNA]</scope>
    <source>
        <strain>E2348/69 / EPEC</strain>
    </source>
</reference>
<name>YOAH_ECO27</name>
<comment type="similarity">
    <text evidence="1">Belongs to the UPF0181 family.</text>
</comment>
<protein>
    <recommendedName>
        <fullName evidence="1">UPF0181 protein YoaH</fullName>
    </recommendedName>
</protein>
<feature type="chain" id="PRO_1000197846" description="UPF0181 protein YoaH">
    <location>
        <begin position="1"/>
        <end position="59"/>
    </location>
</feature>
<proteinExistence type="inferred from homology"/>
<keyword id="KW-1185">Reference proteome</keyword>